<gene>
    <name type="ordered locus">BB1291</name>
</gene>
<protein>
    <recommendedName>
        <fullName evidence="1">UPF0276 protein BB1291</fullName>
    </recommendedName>
</protein>
<organism>
    <name type="scientific">Bordetella bronchiseptica (strain ATCC BAA-588 / NCTC 13252 / RB50)</name>
    <name type="common">Alcaligenes bronchisepticus</name>
    <dbReference type="NCBI Taxonomy" id="257310"/>
    <lineage>
        <taxon>Bacteria</taxon>
        <taxon>Pseudomonadati</taxon>
        <taxon>Pseudomonadota</taxon>
        <taxon>Betaproteobacteria</taxon>
        <taxon>Burkholderiales</taxon>
        <taxon>Alcaligenaceae</taxon>
        <taxon>Bordetella</taxon>
    </lineage>
</organism>
<reference key="1">
    <citation type="journal article" date="2003" name="Nat. Genet.">
        <title>Comparative analysis of the genome sequences of Bordetella pertussis, Bordetella parapertussis and Bordetella bronchiseptica.</title>
        <authorList>
            <person name="Parkhill J."/>
            <person name="Sebaihia M."/>
            <person name="Preston A."/>
            <person name="Murphy L.D."/>
            <person name="Thomson N.R."/>
            <person name="Harris D.E."/>
            <person name="Holden M.T.G."/>
            <person name="Churcher C.M."/>
            <person name="Bentley S.D."/>
            <person name="Mungall K.L."/>
            <person name="Cerdeno-Tarraga A.-M."/>
            <person name="Temple L."/>
            <person name="James K.D."/>
            <person name="Harris B."/>
            <person name="Quail M.A."/>
            <person name="Achtman M."/>
            <person name="Atkin R."/>
            <person name="Baker S."/>
            <person name="Basham D."/>
            <person name="Bason N."/>
            <person name="Cherevach I."/>
            <person name="Chillingworth T."/>
            <person name="Collins M."/>
            <person name="Cronin A."/>
            <person name="Davis P."/>
            <person name="Doggett J."/>
            <person name="Feltwell T."/>
            <person name="Goble A."/>
            <person name="Hamlin N."/>
            <person name="Hauser H."/>
            <person name="Holroyd S."/>
            <person name="Jagels K."/>
            <person name="Leather S."/>
            <person name="Moule S."/>
            <person name="Norberczak H."/>
            <person name="O'Neil S."/>
            <person name="Ormond D."/>
            <person name="Price C."/>
            <person name="Rabbinowitsch E."/>
            <person name="Rutter S."/>
            <person name="Sanders M."/>
            <person name="Saunders D."/>
            <person name="Seeger K."/>
            <person name="Sharp S."/>
            <person name="Simmonds M."/>
            <person name="Skelton J."/>
            <person name="Squares R."/>
            <person name="Squares S."/>
            <person name="Stevens K."/>
            <person name="Unwin L."/>
            <person name="Whitehead S."/>
            <person name="Barrell B.G."/>
            <person name="Maskell D.J."/>
        </authorList>
    </citation>
    <scope>NUCLEOTIDE SEQUENCE [LARGE SCALE GENOMIC DNA]</scope>
    <source>
        <strain>ATCC BAA-588 / NCTC 13252 / RB50</strain>
    </source>
</reference>
<feature type="chain" id="PRO_0000192690" description="UPF0276 protein BB1291">
    <location>
        <begin position="1"/>
        <end position="289"/>
    </location>
</feature>
<comment type="similarity">
    <text evidence="1">Belongs to the UPF0276 family.</text>
</comment>
<evidence type="ECO:0000255" key="1">
    <source>
        <dbReference type="HAMAP-Rule" id="MF_00697"/>
    </source>
</evidence>
<dbReference type="EMBL" id="BX640440">
    <property type="protein sequence ID" value="CAE31789.1"/>
    <property type="molecule type" value="Genomic_DNA"/>
</dbReference>
<dbReference type="RefSeq" id="WP_010926121.1">
    <property type="nucleotide sequence ID" value="NC_002927.3"/>
</dbReference>
<dbReference type="SMR" id="Q7WMU9"/>
<dbReference type="KEGG" id="bbr:BB1291"/>
<dbReference type="eggNOG" id="COG3220">
    <property type="taxonomic scope" value="Bacteria"/>
</dbReference>
<dbReference type="HOGENOM" id="CLU_064263_0_0_4"/>
<dbReference type="Proteomes" id="UP000001027">
    <property type="component" value="Chromosome"/>
</dbReference>
<dbReference type="Gene3D" id="3.20.20.150">
    <property type="entry name" value="Divalent-metal-dependent TIM barrel enzymes"/>
    <property type="match status" value="1"/>
</dbReference>
<dbReference type="HAMAP" id="MF_00697">
    <property type="entry name" value="UPF0276"/>
    <property type="match status" value="1"/>
</dbReference>
<dbReference type="InterPro" id="IPR007801">
    <property type="entry name" value="MbnB/TglH/ChrH"/>
</dbReference>
<dbReference type="InterPro" id="IPR036237">
    <property type="entry name" value="Xyl_isomerase-like_sf"/>
</dbReference>
<dbReference type="NCBIfam" id="NF003818">
    <property type="entry name" value="PRK05409.1"/>
    <property type="match status" value="1"/>
</dbReference>
<dbReference type="PANTHER" id="PTHR42194">
    <property type="entry name" value="UPF0276 PROTEIN HI_1600"/>
    <property type="match status" value="1"/>
</dbReference>
<dbReference type="PANTHER" id="PTHR42194:SF1">
    <property type="entry name" value="UPF0276 PROTEIN HI_1600"/>
    <property type="match status" value="1"/>
</dbReference>
<dbReference type="Pfam" id="PF05114">
    <property type="entry name" value="MbnB_TglH_ChrH"/>
    <property type="match status" value="1"/>
</dbReference>
<dbReference type="SUPFAM" id="SSF51658">
    <property type="entry name" value="Xylose isomerase-like"/>
    <property type="match status" value="1"/>
</dbReference>
<sequence>MPARASRPAPGLPARAGLGFKPEHYATLVEQPPDLGFFEIHAENYMVPGGPAHAQLAWLRERYAISVHGVGLSLGGHDPLDARLLAGHRQLQRRYAPDSISEHLAWSRHDGRYFNDLLPIVYDDAALRRVCAHIDQFQQCLGQPILLENPATYVRFEASHIDEAQFLCELVARTGCGLLLDVNNVYVSAVNHGFDARAYLARLPLAAVGEIHLAGHARQRDAHGRAVLIDSHDAPVDEAVWDLYEYTLALTGPVATLLERDGNIPPLAALLAETDRVAACLARGLALAA</sequence>
<name>Y1291_BORBR</name>
<accession>Q7WMU9</accession>
<proteinExistence type="inferred from homology"/>